<comment type="catalytic activity">
    <reaction evidence="1">
        <text>tRNA(Asn) + L-asparagine + ATP = L-asparaginyl-tRNA(Asn) + AMP + diphosphate + H(+)</text>
        <dbReference type="Rhea" id="RHEA:11180"/>
        <dbReference type="Rhea" id="RHEA-COMP:9659"/>
        <dbReference type="Rhea" id="RHEA-COMP:9674"/>
        <dbReference type="ChEBI" id="CHEBI:15378"/>
        <dbReference type="ChEBI" id="CHEBI:30616"/>
        <dbReference type="ChEBI" id="CHEBI:33019"/>
        <dbReference type="ChEBI" id="CHEBI:58048"/>
        <dbReference type="ChEBI" id="CHEBI:78442"/>
        <dbReference type="ChEBI" id="CHEBI:78515"/>
        <dbReference type="ChEBI" id="CHEBI:456215"/>
        <dbReference type="EC" id="6.1.1.22"/>
    </reaction>
</comment>
<comment type="subunit">
    <text evidence="1">Homodimer.</text>
</comment>
<comment type="subcellular location">
    <subcellularLocation>
        <location>Cytoplasm</location>
    </subcellularLocation>
</comment>
<comment type="similarity">
    <text evidence="1">Belongs to the class-II aminoacyl-tRNA synthetase family.</text>
</comment>
<accession>Q8PAC4</accession>
<name>SYN_XANCP</name>
<evidence type="ECO:0000255" key="1">
    <source>
        <dbReference type="HAMAP-Rule" id="MF_00534"/>
    </source>
</evidence>
<keyword id="KW-0030">Aminoacyl-tRNA synthetase</keyword>
<keyword id="KW-0067">ATP-binding</keyword>
<keyword id="KW-0963">Cytoplasm</keyword>
<keyword id="KW-0436">Ligase</keyword>
<keyword id="KW-0547">Nucleotide-binding</keyword>
<keyword id="KW-0648">Protein biosynthesis</keyword>
<keyword id="KW-1185">Reference proteome</keyword>
<dbReference type="EC" id="6.1.1.22" evidence="1"/>
<dbReference type="EMBL" id="AE008922">
    <property type="protein sequence ID" value="AAM40856.1"/>
    <property type="molecule type" value="Genomic_DNA"/>
</dbReference>
<dbReference type="RefSeq" id="NP_636932.1">
    <property type="nucleotide sequence ID" value="NC_003902.1"/>
</dbReference>
<dbReference type="RefSeq" id="WP_011036745.1">
    <property type="nucleotide sequence ID" value="NC_003902.1"/>
</dbReference>
<dbReference type="SMR" id="Q8PAC4"/>
<dbReference type="STRING" id="190485.XCC1561"/>
<dbReference type="EnsemblBacteria" id="AAM40856">
    <property type="protein sequence ID" value="AAM40856"/>
    <property type="gene ID" value="XCC1561"/>
</dbReference>
<dbReference type="KEGG" id="xcc:XCC1561"/>
<dbReference type="PATRIC" id="fig|190485.4.peg.1674"/>
<dbReference type="eggNOG" id="COG0017">
    <property type="taxonomic scope" value="Bacteria"/>
</dbReference>
<dbReference type="HOGENOM" id="CLU_004553_2_0_6"/>
<dbReference type="OrthoDB" id="9762036at2"/>
<dbReference type="Proteomes" id="UP000001010">
    <property type="component" value="Chromosome"/>
</dbReference>
<dbReference type="GO" id="GO:0005737">
    <property type="term" value="C:cytoplasm"/>
    <property type="evidence" value="ECO:0007669"/>
    <property type="project" value="UniProtKB-SubCell"/>
</dbReference>
<dbReference type="GO" id="GO:0004816">
    <property type="term" value="F:asparagine-tRNA ligase activity"/>
    <property type="evidence" value="ECO:0007669"/>
    <property type="project" value="UniProtKB-UniRule"/>
</dbReference>
<dbReference type="GO" id="GO:0005524">
    <property type="term" value="F:ATP binding"/>
    <property type="evidence" value="ECO:0007669"/>
    <property type="project" value="UniProtKB-UniRule"/>
</dbReference>
<dbReference type="GO" id="GO:0003676">
    <property type="term" value="F:nucleic acid binding"/>
    <property type="evidence" value="ECO:0007669"/>
    <property type="project" value="InterPro"/>
</dbReference>
<dbReference type="GO" id="GO:0006421">
    <property type="term" value="P:asparaginyl-tRNA aminoacylation"/>
    <property type="evidence" value="ECO:0000318"/>
    <property type="project" value="GO_Central"/>
</dbReference>
<dbReference type="CDD" id="cd00776">
    <property type="entry name" value="AsxRS_core"/>
    <property type="match status" value="1"/>
</dbReference>
<dbReference type="CDD" id="cd04318">
    <property type="entry name" value="EcAsnRS_like_N"/>
    <property type="match status" value="1"/>
</dbReference>
<dbReference type="FunFam" id="3.30.930.10:FF:000016">
    <property type="entry name" value="Asparagine--tRNA ligase"/>
    <property type="match status" value="1"/>
</dbReference>
<dbReference type="Gene3D" id="3.30.930.10">
    <property type="entry name" value="Bira Bifunctional Protein, Domain 2"/>
    <property type="match status" value="1"/>
</dbReference>
<dbReference type="Gene3D" id="2.40.50.140">
    <property type="entry name" value="Nucleic acid-binding proteins"/>
    <property type="match status" value="1"/>
</dbReference>
<dbReference type="HAMAP" id="MF_00534">
    <property type="entry name" value="Asn_tRNA_synth"/>
    <property type="match status" value="1"/>
</dbReference>
<dbReference type="InterPro" id="IPR004364">
    <property type="entry name" value="Aa-tRNA-synt_II"/>
</dbReference>
<dbReference type="InterPro" id="IPR006195">
    <property type="entry name" value="aa-tRNA-synth_II"/>
</dbReference>
<dbReference type="InterPro" id="IPR045864">
    <property type="entry name" value="aa-tRNA-synth_II/BPL/LPL"/>
</dbReference>
<dbReference type="InterPro" id="IPR004522">
    <property type="entry name" value="Asn-tRNA-ligase"/>
</dbReference>
<dbReference type="InterPro" id="IPR002312">
    <property type="entry name" value="Asp/Asn-tRNA-synth_IIb"/>
</dbReference>
<dbReference type="InterPro" id="IPR012340">
    <property type="entry name" value="NA-bd_OB-fold"/>
</dbReference>
<dbReference type="InterPro" id="IPR004365">
    <property type="entry name" value="NA-bd_OB_tRNA"/>
</dbReference>
<dbReference type="NCBIfam" id="TIGR00457">
    <property type="entry name" value="asnS"/>
    <property type="match status" value="1"/>
</dbReference>
<dbReference type="NCBIfam" id="NF003037">
    <property type="entry name" value="PRK03932.1"/>
    <property type="match status" value="1"/>
</dbReference>
<dbReference type="PANTHER" id="PTHR22594:SF34">
    <property type="entry name" value="ASPARAGINE--TRNA LIGASE, MITOCHONDRIAL-RELATED"/>
    <property type="match status" value="1"/>
</dbReference>
<dbReference type="PANTHER" id="PTHR22594">
    <property type="entry name" value="ASPARTYL/LYSYL-TRNA SYNTHETASE"/>
    <property type="match status" value="1"/>
</dbReference>
<dbReference type="Pfam" id="PF00152">
    <property type="entry name" value="tRNA-synt_2"/>
    <property type="match status" value="1"/>
</dbReference>
<dbReference type="Pfam" id="PF01336">
    <property type="entry name" value="tRNA_anti-codon"/>
    <property type="match status" value="1"/>
</dbReference>
<dbReference type="PRINTS" id="PR01042">
    <property type="entry name" value="TRNASYNTHASP"/>
</dbReference>
<dbReference type="SUPFAM" id="SSF55681">
    <property type="entry name" value="Class II aaRS and biotin synthetases"/>
    <property type="match status" value="1"/>
</dbReference>
<dbReference type="SUPFAM" id="SSF50249">
    <property type="entry name" value="Nucleic acid-binding proteins"/>
    <property type="match status" value="1"/>
</dbReference>
<dbReference type="PROSITE" id="PS50862">
    <property type="entry name" value="AA_TRNA_LIGASE_II"/>
    <property type="match status" value="1"/>
</dbReference>
<protein>
    <recommendedName>
        <fullName evidence="1">Asparagine--tRNA ligase</fullName>
        <ecNumber evidence="1">6.1.1.22</ecNumber>
    </recommendedName>
    <alternativeName>
        <fullName evidence="1">Asparaginyl-tRNA synthetase</fullName>
        <shortName evidence="1">AsnRS</shortName>
    </alternativeName>
</protein>
<feature type="chain" id="PRO_0000176480" description="Asparagine--tRNA ligase">
    <location>
        <begin position="1"/>
        <end position="464"/>
    </location>
</feature>
<gene>
    <name evidence="1" type="primary">asnS</name>
    <name type="ordered locus">XCC1561</name>
</gene>
<sequence length="464" mass="51913">MTVVSVEHALAGKIPEGGEVTVRGWVRTLRGSAGLAFINVTDGSCFAPIQVVATDTLPNFDEIKRLTSGCSLIAKGVLVKSQGKGQSFEIQASGVEIVGWVEDPLTYPIQPKPMSPEFLREVAHLRPRTNLFGAVTRIRNCLAQAVHRFFHQNGFNWISTPIITTSDAEGAGQMFRVSSLDMVNLPRTAQGEVDFSRDFFGKETFLTVSGQLNVEAYCLALSKVYTFGPTFRAENSHTTRHLAEFWMIEPEIAFADLAEDARLAEQFLKYLFRAVLDERGDDLAFLAERVDKNAISKLEAFINAPFEQIDYTEAVKLLQNSGKKFDFPVEWGLDLQTEHERWLTEEHIGRPVVVTNYPEHIKAFYMRLNDDGKTVAAMDVLAPGIGEIIGGSQREERLDVLDARMAQFGLDKEHYSWYRDFRRYGSVPHAGFGLGFERLVVYVCGLSNIRDAIPYPRAPGSAEF</sequence>
<proteinExistence type="inferred from homology"/>
<reference key="1">
    <citation type="journal article" date="2002" name="Nature">
        <title>Comparison of the genomes of two Xanthomonas pathogens with differing host specificities.</title>
        <authorList>
            <person name="da Silva A.C.R."/>
            <person name="Ferro J.A."/>
            <person name="Reinach F.C."/>
            <person name="Farah C.S."/>
            <person name="Furlan L.R."/>
            <person name="Quaggio R.B."/>
            <person name="Monteiro-Vitorello C.B."/>
            <person name="Van Sluys M.A."/>
            <person name="Almeida N.F. Jr."/>
            <person name="Alves L.M.C."/>
            <person name="do Amaral A.M."/>
            <person name="Bertolini M.C."/>
            <person name="Camargo L.E.A."/>
            <person name="Camarotte G."/>
            <person name="Cannavan F."/>
            <person name="Cardozo J."/>
            <person name="Chambergo F."/>
            <person name="Ciapina L.P."/>
            <person name="Cicarelli R.M.B."/>
            <person name="Coutinho L.L."/>
            <person name="Cursino-Santos J.R."/>
            <person name="El-Dorry H."/>
            <person name="Faria J.B."/>
            <person name="Ferreira A.J.S."/>
            <person name="Ferreira R.C.C."/>
            <person name="Ferro M.I.T."/>
            <person name="Formighieri E.F."/>
            <person name="Franco M.C."/>
            <person name="Greggio C.C."/>
            <person name="Gruber A."/>
            <person name="Katsuyama A.M."/>
            <person name="Kishi L.T."/>
            <person name="Leite R.P."/>
            <person name="Lemos E.G.M."/>
            <person name="Lemos M.V.F."/>
            <person name="Locali E.C."/>
            <person name="Machado M.A."/>
            <person name="Madeira A.M.B.N."/>
            <person name="Martinez-Rossi N.M."/>
            <person name="Martins E.C."/>
            <person name="Meidanis J."/>
            <person name="Menck C.F.M."/>
            <person name="Miyaki C.Y."/>
            <person name="Moon D.H."/>
            <person name="Moreira L.M."/>
            <person name="Novo M.T.M."/>
            <person name="Okura V.K."/>
            <person name="Oliveira M.C."/>
            <person name="Oliveira V.R."/>
            <person name="Pereira H.A."/>
            <person name="Rossi A."/>
            <person name="Sena J.A.D."/>
            <person name="Silva C."/>
            <person name="de Souza R.F."/>
            <person name="Spinola L.A.F."/>
            <person name="Takita M.A."/>
            <person name="Tamura R.E."/>
            <person name="Teixeira E.C."/>
            <person name="Tezza R.I.D."/>
            <person name="Trindade dos Santos M."/>
            <person name="Truffi D."/>
            <person name="Tsai S.M."/>
            <person name="White F.F."/>
            <person name="Setubal J.C."/>
            <person name="Kitajima J.P."/>
        </authorList>
    </citation>
    <scope>NUCLEOTIDE SEQUENCE [LARGE SCALE GENOMIC DNA]</scope>
    <source>
        <strain>ATCC 33913 / DSM 3586 / NCPPB 528 / LMG 568 / P 25</strain>
    </source>
</reference>
<organism>
    <name type="scientific">Xanthomonas campestris pv. campestris (strain ATCC 33913 / DSM 3586 / NCPPB 528 / LMG 568 / P 25)</name>
    <dbReference type="NCBI Taxonomy" id="190485"/>
    <lineage>
        <taxon>Bacteria</taxon>
        <taxon>Pseudomonadati</taxon>
        <taxon>Pseudomonadota</taxon>
        <taxon>Gammaproteobacteria</taxon>
        <taxon>Lysobacterales</taxon>
        <taxon>Lysobacteraceae</taxon>
        <taxon>Xanthomonas</taxon>
    </lineage>
</organism>